<proteinExistence type="inferred from homology"/>
<protein>
    <recommendedName>
        <fullName evidence="2">ATP synthase subunit b</fullName>
    </recommendedName>
    <alternativeName>
        <fullName evidence="2">ATP synthase F(0) sector subunit b</fullName>
    </alternativeName>
    <alternativeName>
        <fullName evidence="2">ATPase subunit I</fullName>
    </alternativeName>
    <alternativeName>
        <fullName evidence="2">F-type ATPase subunit b</fullName>
        <shortName evidence="2">F-ATPase subunit b</shortName>
    </alternativeName>
</protein>
<evidence type="ECO:0000250" key="1"/>
<evidence type="ECO:0000255" key="2">
    <source>
        <dbReference type="HAMAP-Rule" id="MF_01398"/>
    </source>
</evidence>
<comment type="function">
    <text evidence="2">F(1)F(0) ATP synthase produces ATP from ADP in the presence of a proton or sodium gradient. F-type ATPases consist of two structural domains, F(1) containing the extramembraneous catalytic core and F(0) containing the membrane proton channel, linked together by a central stalk and a peripheral stalk. During catalysis, ATP synthesis in the catalytic domain of F(1) is coupled via a rotary mechanism of the central stalk subunits to proton translocation.</text>
</comment>
<comment type="function">
    <text evidence="2">Component of the F(0) channel, it forms part of the peripheral stalk, linking F(1) to F(0).</text>
</comment>
<comment type="subunit">
    <text evidence="1">F-type ATPases have 2 components, F(1) - the catalytic core - and F(0) - the membrane proton channel. F(1) has five subunits: alpha(3), beta(3), gamma(1), delta(1), epsilon(1). F(0) has four main subunits: a(1), b(2) and c(10-14). The alpha and beta chains form an alternating ring which encloses part of the gamma chain. F(1) is attached to F(0) by a central stalk formed by the gamma and epsilon chains, while a peripheral stalk is formed by the delta and b chains (By similarity).</text>
</comment>
<comment type="subcellular location">
    <subcellularLocation>
        <location evidence="2">Cell inner membrane</location>
        <topology evidence="2">Single-pass membrane protein</topology>
    </subcellularLocation>
</comment>
<comment type="similarity">
    <text evidence="2">Belongs to the ATPase B chain family.</text>
</comment>
<reference key="1">
    <citation type="submission" date="2008-06" db="EMBL/GenBank/DDBJ databases">
        <title>Complete sequence of Pelodictyon phaeoclathratiforme BU-1.</title>
        <authorList>
            <consortium name="US DOE Joint Genome Institute"/>
            <person name="Lucas S."/>
            <person name="Copeland A."/>
            <person name="Lapidus A."/>
            <person name="Glavina del Rio T."/>
            <person name="Dalin E."/>
            <person name="Tice H."/>
            <person name="Bruce D."/>
            <person name="Goodwin L."/>
            <person name="Pitluck S."/>
            <person name="Schmutz J."/>
            <person name="Larimer F."/>
            <person name="Land M."/>
            <person name="Hauser L."/>
            <person name="Kyrpides N."/>
            <person name="Mikhailova N."/>
            <person name="Liu Z."/>
            <person name="Li T."/>
            <person name="Zhao F."/>
            <person name="Overmann J."/>
            <person name="Bryant D.A."/>
            <person name="Richardson P."/>
        </authorList>
    </citation>
    <scope>NUCLEOTIDE SEQUENCE [LARGE SCALE GENOMIC DNA]</scope>
    <source>
        <strain>DSM 5477 / BU-1</strain>
    </source>
</reference>
<accession>B4SH38</accession>
<name>ATPF_PELPB</name>
<organism>
    <name type="scientific">Pelodictyon phaeoclathratiforme (strain DSM 5477 / BU-1)</name>
    <dbReference type="NCBI Taxonomy" id="324925"/>
    <lineage>
        <taxon>Bacteria</taxon>
        <taxon>Pseudomonadati</taxon>
        <taxon>Chlorobiota</taxon>
        <taxon>Chlorobiia</taxon>
        <taxon>Chlorobiales</taxon>
        <taxon>Chlorobiaceae</taxon>
        <taxon>Chlorobium/Pelodictyon group</taxon>
        <taxon>Pelodictyon</taxon>
    </lineage>
</organism>
<keyword id="KW-0066">ATP synthesis</keyword>
<keyword id="KW-0997">Cell inner membrane</keyword>
<keyword id="KW-1003">Cell membrane</keyword>
<keyword id="KW-0138">CF(0)</keyword>
<keyword id="KW-0375">Hydrogen ion transport</keyword>
<keyword id="KW-0406">Ion transport</keyword>
<keyword id="KW-0472">Membrane</keyword>
<keyword id="KW-1185">Reference proteome</keyword>
<keyword id="KW-0812">Transmembrane</keyword>
<keyword id="KW-1133">Transmembrane helix</keyword>
<keyword id="KW-0813">Transport</keyword>
<gene>
    <name evidence="2" type="primary">atpF</name>
    <name type="ordered locus">Ppha_2883</name>
</gene>
<feature type="chain" id="PRO_0000368652" description="ATP synthase subunit b">
    <location>
        <begin position="1"/>
        <end position="175"/>
    </location>
</feature>
<feature type="transmembrane region" description="Helical" evidence="2">
    <location>
        <begin position="20"/>
        <end position="40"/>
    </location>
</feature>
<sequence>MLTSGIILLAGSLLSPNPGLIFWTAITFVIVLLILKKIAWGPIIGALEEREKGIQSSIDRAHSAKEESEAILRKNRELLAKADAESDKIIREGKDYADKLRADITEKAQSEAKKMIATAKDEIEQEKRRALDVLRNEVADLAVKGAEKIIKTTLDADMQKKIVDSMIQDLSTKRN</sequence>
<dbReference type="EMBL" id="CP001110">
    <property type="protein sequence ID" value="ACF45026.1"/>
    <property type="molecule type" value="Genomic_DNA"/>
</dbReference>
<dbReference type="RefSeq" id="WP_012509494.1">
    <property type="nucleotide sequence ID" value="NC_011060.1"/>
</dbReference>
<dbReference type="SMR" id="B4SH38"/>
<dbReference type="STRING" id="324925.Ppha_2883"/>
<dbReference type="KEGG" id="pph:Ppha_2883"/>
<dbReference type="eggNOG" id="COG0711">
    <property type="taxonomic scope" value="Bacteria"/>
</dbReference>
<dbReference type="HOGENOM" id="CLU_079215_4_1_10"/>
<dbReference type="OrthoDB" id="9795289at2"/>
<dbReference type="Proteomes" id="UP000002724">
    <property type="component" value="Chromosome"/>
</dbReference>
<dbReference type="GO" id="GO:0005886">
    <property type="term" value="C:plasma membrane"/>
    <property type="evidence" value="ECO:0007669"/>
    <property type="project" value="UniProtKB-SubCell"/>
</dbReference>
<dbReference type="GO" id="GO:0045259">
    <property type="term" value="C:proton-transporting ATP synthase complex"/>
    <property type="evidence" value="ECO:0007669"/>
    <property type="project" value="UniProtKB-KW"/>
</dbReference>
<dbReference type="GO" id="GO:0046933">
    <property type="term" value="F:proton-transporting ATP synthase activity, rotational mechanism"/>
    <property type="evidence" value="ECO:0007669"/>
    <property type="project" value="UniProtKB-UniRule"/>
</dbReference>
<dbReference type="GO" id="GO:0046961">
    <property type="term" value="F:proton-transporting ATPase activity, rotational mechanism"/>
    <property type="evidence" value="ECO:0007669"/>
    <property type="project" value="TreeGrafter"/>
</dbReference>
<dbReference type="CDD" id="cd06503">
    <property type="entry name" value="ATP-synt_Fo_b"/>
    <property type="match status" value="1"/>
</dbReference>
<dbReference type="Gene3D" id="1.20.5.620">
    <property type="entry name" value="F1F0 ATP synthase subunit B, membrane domain"/>
    <property type="match status" value="1"/>
</dbReference>
<dbReference type="HAMAP" id="MF_01398">
    <property type="entry name" value="ATP_synth_b_bprime"/>
    <property type="match status" value="1"/>
</dbReference>
<dbReference type="InterPro" id="IPR028987">
    <property type="entry name" value="ATP_synth_B-like_membr_sf"/>
</dbReference>
<dbReference type="InterPro" id="IPR002146">
    <property type="entry name" value="ATP_synth_b/b'su_bac/chlpt"/>
</dbReference>
<dbReference type="InterPro" id="IPR005864">
    <property type="entry name" value="ATP_synth_F0_bsu_bac"/>
</dbReference>
<dbReference type="InterPro" id="IPR050059">
    <property type="entry name" value="ATP_synthase_B_chain"/>
</dbReference>
<dbReference type="NCBIfam" id="TIGR01144">
    <property type="entry name" value="ATP_synt_b"/>
    <property type="match status" value="1"/>
</dbReference>
<dbReference type="NCBIfam" id="NF011042">
    <property type="entry name" value="PRK14472.1"/>
    <property type="match status" value="1"/>
</dbReference>
<dbReference type="PANTHER" id="PTHR33445:SF1">
    <property type="entry name" value="ATP SYNTHASE SUBUNIT B"/>
    <property type="match status" value="1"/>
</dbReference>
<dbReference type="PANTHER" id="PTHR33445">
    <property type="entry name" value="ATP SYNTHASE SUBUNIT B', CHLOROPLASTIC"/>
    <property type="match status" value="1"/>
</dbReference>
<dbReference type="Pfam" id="PF00430">
    <property type="entry name" value="ATP-synt_B"/>
    <property type="match status" value="1"/>
</dbReference>
<dbReference type="SUPFAM" id="SSF81573">
    <property type="entry name" value="F1F0 ATP synthase subunit B, membrane domain"/>
    <property type="match status" value="1"/>
</dbReference>